<name>E4PD_ECOUT</name>
<comment type="function">
    <text evidence="2">Catalyzes the NAD-dependent conversion of D-erythrose 4-phosphate to 4-phosphoerythronate.</text>
</comment>
<comment type="catalytic activity">
    <reaction evidence="2">
        <text>D-erythrose 4-phosphate + NAD(+) + H2O = 4-phospho-D-erythronate + NADH + 2 H(+)</text>
        <dbReference type="Rhea" id="RHEA:12056"/>
        <dbReference type="ChEBI" id="CHEBI:15377"/>
        <dbReference type="ChEBI" id="CHEBI:15378"/>
        <dbReference type="ChEBI" id="CHEBI:16897"/>
        <dbReference type="ChEBI" id="CHEBI:57540"/>
        <dbReference type="ChEBI" id="CHEBI:57945"/>
        <dbReference type="ChEBI" id="CHEBI:58766"/>
        <dbReference type="EC" id="1.2.1.72"/>
    </reaction>
</comment>
<comment type="pathway">
    <text evidence="2">Cofactor biosynthesis; pyridoxine 5'-phosphate biosynthesis; pyridoxine 5'-phosphate from D-erythrose 4-phosphate: step 1/5.</text>
</comment>
<comment type="subunit">
    <text evidence="2">Homotetramer.</text>
</comment>
<comment type="subcellular location">
    <subcellularLocation>
        <location evidence="2">Cytoplasm</location>
    </subcellularLocation>
</comment>
<comment type="similarity">
    <text evidence="2">Belongs to the glyceraldehyde-3-phosphate dehydrogenase family. Epd subfamily.</text>
</comment>
<comment type="sequence caution" evidence="3">
    <conflict type="erroneous initiation">
        <sequence resource="EMBL-CDS" id="ABE08758"/>
    </conflict>
</comment>
<gene>
    <name evidence="2" type="primary">epd</name>
    <name type="ordered locus">UTI89_C3310</name>
</gene>
<sequence>MTVRVAINGFGRIGRNVVRALYESGRRAEITVVAINELADAAGMAHLLKYDTSHGRFAWEVRQERDQLFVGDDAIRVLHERSLQSLPWRELGVDVVLDCTGVYGSREHGEAHIAAGAKKVLFSHPGSNDLDTTVVYGVNQDQLRAEHRIVSNASCTTNCIIPVIKLLDDAYGIESGTVTTIHSAMHDQQVIDAYHPDLRRTRAASQSIIPVDTKLAAGITRFFPQFNDRFEAIAVRVPTINVTAIDLSVTVKKPVKANEVNLLLQKAAQGAFHGIVDYTELPLVSVDFNHDPHSAIVDGTQTRVSGAHLIKTLVWCDNEWGFANRMLDTTLAMATVAFR</sequence>
<protein>
    <recommendedName>
        <fullName evidence="2">D-erythrose-4-phosphate dehydrogenase</fullName>
        <shortName evidence="2">E4PDH</shortName>
        <ecNumber evidence="2">1.2.1.72</ecNumber>
    </recommendedName>
</protein>
<evidence type="ECO:0000250" key="1"/>
<evidence type="ECO:0000255" key="2">
    <source>
        <dbReference type="HAMAP-Rule" id="MF_01640"/>
    </source>
</evidence>
<evidence type="ECO:0000305" key="3"/>
<reference key="1">
    <citation type="journal article" date="2006" name="Proc. Natl. Acad. Sci. U.S.A.">
        <title>Identification of genes subject to positive selection in uropathogenic strains of Escherichia coli: a comparative genomics approach.</title>
        <authorList>
            <person name="Chen S.L."/>
            <person name="Hung C.-S."/>
            <person name="Xu J."/>
            <person name="Reigstad C.S."/>
            <person name="Magrini V."/>
            <person name="Sabo A."/>
            <person name="Blasiar D."/>
            <person name="Bieri T."/>
            <person name="Meyer R.R."/>
            <person name="Ozersky P."/>
            <person name="Armstrong J.R."/>
            <person name="Fulton R.S."/>
            <person name="Latreille J.P."/>
            <person name="Spieth J."/>
            <person name="Hooton T.M."/>
            <person name="Mardis E.R."/>
            <person name="Hultgren S.J."/>
            <person name="Gordon J.I."/>
        </authorList>
    </citation>
    <scope>NUCLEOTIDE SEQUENCE [LARGE SCALE GENOMIC DNA]</scope>
    <source>
        <strain>UTI89 / UPEC</strain>
    </source>
</reference>
<feature type="initiator methionine" description="Removed" evidence="1">
    <location>
        <position position="1"/>
    </location>
</feature>
<feature type="chain" id="PRO_0000293148" description="D-erythrose-4-phosphate dehydrogenase">
    <location>
        <begin position="2"/>
        <end position="339"/>
    </location>
</feature>
<feature type="active site" description="Nucleophile" evidence="2">
    <location>
        <position position="155"/>
    </location>
</feature>
<feature type="binding site" evidence="2">
    <location>
        <begin position="12"/>
        <end position="13"/>
    </location>
    <ligand>
        <name>NAD(+)</name>
        <dbReference type="ChEBI" id="CHEBI:57540"/>
    </ligand>
</feature>
<feature type="binding site" evidence="2">
    <location>
        <position position="81"/>
    </location>
    <ligand>
        <name>NAD(+)</name>
        <dbReference type="ChEBI" id="CHEBI:57540"/>
    </ligand>
</feature>
<feature type="binding site" evidence="2">
    <location>
        <begin position="154"/>
        <end position="156"/>
    </location>
    <ligand>
        <name>substrate</name>
    </ligand>
</feature>
<feature type="binding site" evidence="2">
    <location>
        <position position="200"/>
    </location>
    <ligand>
        <name>substrate</name>
    </ligand>
</feature>
<feature type="binding site" evidence="2">
    <location>
        <begin position="213"/>
        <end position="214"/>
    </location>
    <ligand>
        <name>substrate</name>
    </ligand>
</feature>
<feature type="binding site" evidence="2">
    <location>
        <position position="236"/>
    </location>
    <ligand>
        <name>substrate</name>
    </ligand>
</feature>
<feature type="binding site" evidence="2">
    <location>
        <position position="318"/>
    </location>
    <ligand>
        <name>NAD(+)</name>
        <dbReference type="ChEBI" id="CHEBI:57540"/>
    </ligand>
</feature>
<feature type="site" description="Activates thiol group during catalysis" evidence="2">
    <location>
        <position position="182"/>
    </location>
</feature>
<proteinExistence type="inferred from homology"/>
<organism>
    <name type="scientific">Escherichia coli (strain UTI89 / UPEC)</name>
    <dbReference type="NCBI Taxonomy" id="364106"/>
    <lineage>
        <taxon>Bacteria</taxon>
        <taxon>Pseudomonadati</taxon>
        <taxon>Pseudomonadota</taxon>
        <taxon>Gammaproteobacteria</taxon>
        <taxon>Enterobacterales</taxon>
        <taxon>Enterobacteriaceae</taxon>
        <taxon>Escherichia</taxon>
    </lineage>
</organism>
<keyword id="KW-0963">Cytoplasm</keyword>
<keyword id="KW-0520">NAD</keyword>
<keyword id="KW-0560">Oxidoreductase</keyword>
<keyword id="KW-0664">Pyridoxine biosynthesis</keyword>
<dbReference type="EC" id="1.2.1.72" evidence="2"/>
<dbReference type="EMBL" id="CP000243">
    <property type="protein sequence ID" value="ABE08758.1"/>
    <property type="status" value="ALT_INIT"/>
    <property type="molecule type" value="Genomic_DNA"/>
</dbReference>
<dbReference type="RefSeq" id="WP_000218483.1">
    <property type="nucleotide sequence ID" value="NZ_CP064825.1"/>
</dbReference>
<dbReference type="SMR" id="Q1R7A6"/>
<dbReference type="KEGG" id="eci:UTI89_C3310"/>
<dbReference type="HOGENOM" id="CLU_030140_0_2_6"/>
<dbReference type="UniPathway" id="UPA00244">
    <property type="reaction ID" value="UER00309"/>
</dbReference>
<dbReference type="Proteomes" id="UP000001952">
    <property type="component" value="Chromosome"/>
</dbReference>
<dbReference type="GO" id="GO:0005737">
    <property type="term" value="C:cytoplasm"/>
    <property type="evidence" value="ECO:0007669"/>
    <property type="project" value="UniProtKB-SubCell"/>
</dbReference>
<dbReference type="GO" id="GO:0048001">
    <property type="term" value="F:erythrose-4-phosphate dehydrogenase activity"/>
    <property type="evidence" value="ECO:0007669"/>
    <property type="project" value="UniProtKB-UniRule"/>
</dbReference>
<dbReference type="GO" id="GO:0051287">
    <property type="term" value="F:NAD binding"/>
    <property type="evidence" value="ECO:0007669"/>
    <property type="project" value="InterPro"/>
</dbReference>
<dbReference type="GO" id="GO:0042823">
    <property type="term" value="P:pyridoxal phosphate biosynthetic process"/>
    <property type="evidence" value="ECO:0007669"/>
    <property type="project" value="UniProtKB-UniRule"/>
</dbReference>
<dbReference type="GO" id="GO:0008615">
    <property type="term" value="P:pyridoxine biosynthetic process"/>
    <property type="evidence" value="ECO:0007669"/>
    <property type="project" value="UniProtKB-UniRule"/>
</dbReference>
<dbReference type="CDD" id="cd23937">
    <property type="entry name" value="GAPDH_C_E4PDH"/>
    <property type="match status" value="1"/>
</dbReference>
<dbReference type="CDD" id="cd17892">
    <property type="entry name" value="GAPDH_N_E4PDH"/>
    <property type="match status" value="1"/>
</dbReference>
<dbReference type="FunFam" id="3.30.360.10:FF:000007">
    <property type="entry name" value="D-erythrose-4-phosphate dehydrogenase"/>
    <property type="match status" value="1"/>
</dbReference>
<dbReference type="FunFam" id="3.40.50.720:FF:000001">
    <property type="entry name" value="Glyceraldehyde-3-phosphate dehydrogenase"/>
    <property type="match status" value="1"/>
</dbReference>
<dbReference type="Gene3D" id="3.30.360.10">
    <property type="entry name" value="Dihydrodipicolinate Reductase, domain 2"/>
    <property type="match status" value="1"/>
</dbReference>
<dbReference type="Gene3D" id="3.40.50.720">
    <property type="entry name" value="NAD(P)-binding Rossmann-like Domain"/>
    <property type="match status" value="1"/>
</dbReference>
<dbReference type="HAMAP" id="MF_01640">
    <property type="entry name" value="E4P_dehydrog"/>
    <property type="match status" value="1"/>
</dbReference>
<dbReference type="InterPro" id="IPR006422">
    <property type="entry name" value="E4P_DH_bac"/>
</dbReference>
<dbReference type="InterPro" id="IPR020831">
    <property type="entry name" value="GlycerAld/Erythrose_P_DH"/>
</dbReference>
<dbReference type="InterPro" id="IPR020830">
    <property type="entry name" value="GlycerAld_3-P_DH_AS"/>
</dbReference>
<dbReference type="InterPro" id="IPR020829">
    <property type="entry name" value="GlycerAld_3-P_DH_cat"/>
</dbReference>
<dbReference type="InterPro" id="IPR020828">
    <property type="entry name" value="GlycerAld_3-P_DH_NAD(P)-bd"/>
</dbReference>
<dbReference type="InterPro" id="IPR036291">
    <property type="entry name" value="NAD(P)-bd_dom_sf"/>
</dbReference>
<dbReference type="NCBIfam" id="TIGR01532">
    <property type="entry name" value="E4PD_g-proteo"/>
    <property type="match status" value="1"/>
</dbReference>
<dbReference type="NCBIfam" id="NF010058">
    <property type="entry name" value="PRK13535.1"/>
    <property type="match status" value="1"/>
</dbReference>
<dbReference type="PANTHER" id="PTHR43148">
    <property type="entry name" value="GLYCERALDEHYDE-3-PHOSPHATE DEHYDROGENASE 2"/>
    <property type="match status" value="1"/>
</dbReference>
<dbReference type="Pfam" id="PF02800">
    <property type="entry name" value="Gp_dh_C"/>
    <property type="match status" value="1"/>
</dbReference>
<dbReference type="Pfam" id="PF00044">
    <property type="entry name" value="Gp_dh_N"/>
    <property type="match status" value="1"/>
</dbReference>
<dbReference type="PIRSF" id="PIRSF000149">
    <property type="entry name" value="GAP_DH"/>
    <property type="match status" value="1"/>
</dbReference>
<dbReference type="PRINTS" id="PR00078">
    <property type="entry name" value="G3PDHDRGNASE"/>
</dbReference>
<dbReference type="SMART" id="SM00846">
    <property type="entry name" value="Gp_dh_N"/>
    <property type="match status" value="1"/>
</dbReference>
<dbReference type="SUPFAM" id="SSF55347">
    <property type="entry name" value="Glyceraldehyde-3-phosphate dehydrogenase-like, C-terminal domain"/>
    <property type="match status" value="1"/>
</dbReference>
<dbReference type="SUPFAM" id="SSF51735">
    <property type="entry name" value="NAD(P)-binding Rossmann-fold domains"/>
    <property type="match status" value="1"/>
</dbReference>
<dbReference type="PROSITE" id="PS00071">
    <property type="entry name" value="GAPDH"/>
    <property type="match status" value="1"/>
</dbReference>
<accession>Q1R7A6</accession>